<dbReference type="EMBL" id="D00621">
    <property type="protein sequence ID" value="BAA00499.1"/>
    <property type="molecule type" value="Genomic_DNA"/>
</dbReference>
<dbReference type="EMBL" id="AF134151">
    <property type="protein sequence ID" value="AAD34785.1"/>
    <property type="molecule type" value="mRNA"/>
</dbReference>
<dbReference type="EMBL" id="DQ189097">
    <property type="protein sequence ID" value="ABA29775.1"/>
    <property type="molecule type" value="Genomic_DNA"/>
</dbReference>
<dbReference type="EMBL" id="EF066511">
    <property type="protein sequence ID" value="ABL09972.1"/>
    <property type="molecule type" value="Genomic_DNA"/>
</dbReference>
<dbReference type="EMBL" id="M35676">
    <property type="protein sequence ID" value="AAA31039.1"/>
    <property type="molecule type" value="mRNA"/>
</dbReference>
<dbReference type="PIR" id="A48169">
    <property type="entry name" value="FTPGB"/>
</dbReference>
<dbReference type="RefSeq" id="NP_999040.1">
    <property type="nucleotide sequence ID" value="NM_213875.1"/>
</dbReference>
<dbReference type="SMR" id="P01228"/>
<dbReference type="FunCoup" id="P01228">
    <property type="interactions" value="181"/>
</dbReference>
<dbReference type="STRING" id="9823.ENSSSCP00000014160"/>
<dbReference type="GlyCosmos" id="P01228">
    <property type="glycosylation" value="2 sites, No reported glycans"/>
</dbReference>
<dbReference type="GlyGen" id="P01228">
    <property type="glycosylation" value="2 sites"/>
</dbReference>
<dbReference type="PaxDb" id="9823-ENSSSCP00000014160"/>
<dbReference type="Ensembl" id="ENSSSCT00000014555.4">
    <property type="protein sequence ID" value="ENSSSCP00000014160.2"/>
    <property type="gene ID" value="ENSSSCG00000013328.4"/>
</dbReference>
<dbReference type="Ensembl" id="ENSSSCT00015003072.1">
    <property type="protein sequence ID" value="ENSSSCP00015001000.1"/>
    <property type="gene ID" value="ENSSSCG00015002484.1"/>
</dbReference>
<dbReference type="Ensembl" id="ENSSSCT00045064077.1">
    <property type="protein sequence ID" value="ENSSSCP00045045238.1"/>
    <property type="gene ID" value="ENSSSCG00045037160.1"/>
</dbReference>
<dbReference type="Ensembl" id="ENSSSCT00055033933.1">
    <property type="protein sequence ID" value="ENSSSCP00055026967.1"/>
    <property type="gene ID" value="ENSSSCG00055017256.1"/>
</dbReference>
<dbReference type="Ensembl" id="ENSSSCT00060072875.1">
    <property type="protein sequence ID" value="ENSSSCP00060031425.1"/>
    <property type="gene ID" value="ENSSSCG00060053521.1"/>
</dbReference>
<dbReference type="Ensembl" id="ENSSSCT00065056533.1">
    <property type="protein sequence ID" value="ENSSSCP00065024589.1"/>
    <property type="gene ID" value="ENSSSCG00065041317.1"/>
</dbReference>
<dbReference type="Ensembl" id="ENSSSCT00070008873.1">
    <property type="protein sequence ID" value="ENSSSCP00070007285.1"/>
    <property type="gene ID" value="ENSSSCG00070004693.1"/>
</dbReference>
<dbReference type="Ensembl" id="ENSSSCT00085038888">
    <property type="protein sequence ID" value="ENSSSCP00085027061"/>
    <property type="gene ID" value="ENSSSCG00085020379"/>
</dbReference>
<dbReference type="Ensembl" id="ENSSSCT00090037842">
    <property type="protein sequence ID" value="ENSSSCP00090023587"/>
    <property type="gene ID" value="ENSSSCG00090021353"/>
</dbReference>
<dbReference type="Ensembl" id="ENSSSCT00105078607">
    <property type="protein sequence ID" value="ENSSSCP00105055655"/>
    <property type="gene ID" value="ENSSSCG00105041216"/>
</dbReference>
<dbReference type="Ensembl" id="ENSSSCT00110061104">
    <property type="protein sequence ID" value="ENSSSCP00110042806"/>
    <property type="gene ID" value="ENSSSCG00110031990"/>
</dbReference>
<dbReference type="Ensembl" id="ENSSSCT00115006149">
    <property type="protein sequence ID" value="ENSSSCP00115005740"/>
    <property type="gene ID" value="ENSSSCG00115003610"/>
</dbReference>
<dbReference type="Ensembl" id="ENSSSCT00130040378">
    <property type="protein sequence ID" value="ENSSSCP00130028476"/>
    <property type="gene ID" value="ENSSSCG00130020805"/>
</dbReference>
<dbReference type="GeneID" id="396895"/>
<dbReference type="KEGG" id="ssc:396895"/>
<dbReference type="CTD" id="2488"/>
<dbReference type="VGNC" id="VGNC:99654">
    <property type="gene designation" value="FSHB"/>
</dbReference>
<dbReference type="eggNOG" id="ENOG502S39C">
    <property type="taxonomic scope" value="Eukaryota"/>
</dbReference>
<dbReference type="GeneTree" id="ENSGT00940000160051"/>
<dbReference type="HOGENOM" id="CLU_126319_3_0_1"/>
<dbReference type="InParanoid" id="P01228"/>
<dbReference type="OMA" id="PVATGCH"/>
<dbReference type="OrthoDB" id="8453657at2759"/>
<dbReference type="TreeFam" id="TF332940"/>
<dbReference type="Reactome" id="R-SSC-209822">
    <property type="pathway name" value="Glycoprotein hormones"/>
</dbReference>
<dbReference type="Reactome" id="R-SSC-375281">
    <property type="pathway name" value="Hormone ligand-binding receptors"/>
</dbReference>
<dbReference type="Reactome" id="R-SSC-418555">
    <property type="pathway name" value="G alpha (s) signalling events"/>
</dbReference>
<dbReference type="Proteomes" id="UP000008227">
    <property type="component" value="Chromosome 2"/>
</dbReference>
<dbReference type="Proteomes" id="UP000314985">
    <property type="component" value="Chromosome 2"/>
</dbReference>
<dbReference type="Proteomes" id="UP000694570">
    <property type="component" value="Unplaced"/>
</dbReference>
<dbReference type="Proteomes" id="UP000694571">
    <property type="component" value="Unplaced"/>
</dbReference>
<dbReference type="Proteomes" id="UP000694720">
    <property type="component" value="Unplaced"/>
</dbReference>
<dbReference type="Proteomes" id="UP000694722">
    <property type="component" value="Unplaced"/>
</dbReference>
<dbReference type="Proteomes" id="UP000694723">
    <property type="component" value="Unplaced"/>
</dbReference>
<dbReference type="Proteomes" id="UP000694724">
    <property type="component" value="Unplaced"/>
</dbReference>
<dbReference type="Proteomes" id="UP000694725">
    <property type="component" value="Unplaced"/>
</dbReference>
<dbReference type="Proteomes" id="UP000694726">
    <property type="component" value="Unplaced"/>
</dbReference>
<dbReference type="Proteomes" id="UP000694727">
    <property type="component" value="Unplaced"/>
</dbReference>
<dbReference type="Proteomes" id="UP000694728">
    <property type="component" value="Unplaced"/>
</dbReference>
<dbReference type="Bgee" id="ENSSSCG00000013328">
    <property type="expression patterns" value="Expressed in pituitary gland and 4 other cell types or tissues"/>
</dbReference>
<dbReference type="GO" id="GO:0005737">
    <property type="term" value="C:cytoplasm"/>
    <property type="evidence" value="ECO:0000318"/>
    <property type="project" value="GO_Central"/>
</dbReference>
<dbReference type="GO" id="GO:0005615">
    <property type="term" value="C:extracellular space"/>
    <property type="evidence" value="ECO:0000250"/>
    <property type="project" value="UniProtKB"/>
</dbReference>
<dbReference type="GO" id="GO:0016914">
    <property type="term" value="C:follicle-stimulating hormone complex"/>
    <property type="evidence" value="ECO:0000250"/>
    <property type="project" value="UniProtKB"/>
</dbReference>
<dbReference type="GO" id="GO:0016913">
    <property type="term" value="F:follicle-stimulating hormone activity"/>
    <property type="evidence" value="ECO:0000250"/>
    <property type="project" value="UniProtKB"/>
</dbReference>
<dbReference type="GO" id="GO:0042699">
    <property type="term" value="P:follicle-stimulating hormone signaling pathway"/>
    <property type="evidence" value="ECO:0000318"/>
    <property type="project" value="GO_Central"/>
</dbReference>
<dbReference type="GO" id="GO:0007186">
    <property type="term" value="P:G protein-coupled receptor signaling pathway"/>
    <property type="evidence" value="ECO:0000250"/>
    <property type="project" value="UniProtKB"/>
</dbReference>
<dbReference type="GO" id="GO:0045780">
    <property type="term" value="P:positive regulation of bone resorption"/>
    <property type="evidence" value="ECO:0007669"/>
    <property type="project" value="Ensembl"/>
</dbReference>
<dbReference type="GO" id="GO:0010628">
    <property type="term" value="P:positive regulation of gene expression"/>
    <property type="evidence" value="ECO:0007669"/>
    <property type="project" value="Ensembl"/>
</dbReference>
<dbReference type="GO" id="GO:0010893">
    <property type="term" value="P:positive regulation of steroid biosynthetic process"/>
    <property type="evidence" value="ECO:0007669"/>
    <property type="project" value="Ensembl"/>
</dbReference>
<dbReference type="GO" id="GO:0045670">
    <property type="term" value="P:regulation of osteoclast differentiation"/>
    <property type="evidence" value="ECO:0007669"/>
    <property type="project" value="Ensembl"/>
</dbReference>
<dbReference type="GO" id="GO:0010469">
    <property type="term" value="P:regulation of signaling receptor activity"/>
    <property type="evidence" value="ECO:0000250"/>
    <property type="project" value="UniProtKB"/>
</dbReference>
<dbReference type="GO" id="GO:0060011">
    <property type="term" value="P:Sertoli cell proliferation"/>
    <property type="evidence" value="ECO:0007669"/>
    <property type="project" value="Ensembl"/>
</dbReference>
<dbReference type="GO" id="GO:0007283">
    <property type="term" value="P:spermatogenesis"/>
    <property type="evidence" value="ECO:0007669"/>
    <property type="project" value="Ensembl"/>
</dbReference>
<dbReference type="GO" id="GO:0007179">
    <property type="term" value="P:transforming growth factor beta receptor signaling pathway"/>
    <property type="evidence" value="ECO:0007669"/>
    <property type="project" value="Ensembl"/>
</dbReference>
<dbReference type="CDD" id="cd00069">
    <property type="entry name" value="GHB_like"/>
    <property type="match status" value="1"/>
</dbReference>
<dbReference type="FunFam" id="2.10.90.10:FF:000007">
    <property type="entry name" value="Luteinizing hormone beta subunit"/>
    <property type="match status" value="1"/>
</dbReference>
<dbReference type="Gene3D" id="2.10.90.10">
    <property type="entry name" value="Cystine-knot cytokines"/>
    <property type="match status" value="1"/>
</dbReference>
<dbReference type="InterPro" id="IPR029034">
    <property type="entry name" value="Cystine-knot_cytokine"/>
</dbReference>
<dbReference type="InterPro" id="IPR006208">
    <property type="entry name" value="Glyco_hormone_CN"/>
</dbReference>
<dbReference type="InterPro" id="IPR001545">
    <property type="entry name" value="Gonadotropin_bsu"/>
</dbReference>
<dbReference type="InterPro" id="IPR018245">
    <property type="entry name" value="Gonadotropin_bsu_CS"/>
</dbReference>
<dbReference type="PANTHER" id="PTHR11515:SF17">
    <property type="entry name" value="FOLLITROPIN SUBUNIT BETA"/>
    <property type="match status" value="1"/>
</dbReference>
<dbReference type="PANTHER" id="PTHR11515">
    <property type="entry name" value="GLYCOPROTEIN HORMONE BETA CHAIN"/>
    <property type="match status" value="1"/>
</dbReference>
<dbReference type="Pfam" id="PF00007">
    <property type="entry name" value="Cys_knot"/>
    <property type="match status" value="1"/>
</dbReference>
<dbReference type="SMART" id="SM00068">
    <property type="entry name" value="GHB"/>
    <property type="match status" value="1"/>
</dbReference>
<dbReference type="SUPFAM" id="SSF57501">
    <property type="entry name" value="Cystine-knot cytokines"/>
    <property type="match status" value="1"/>
</dbReference>
<dbReference type="PROSITE" id="PS00261">
    <property type="entry name" value="GLYCO_HORMONE_BETA_1"/>
    <property type="match status" value="1"/>
</dbReference>
<dbReference type="PROSITE" id="PS00689">
    <property type="entry name" value="GLYCO_HORMONE_BETA_2"/>
    <property type="match status" value="1"/>
</dbReference>
<keyword id="KW-0903">Direct protein sequencing</keyword>
<keyword id="KW-1015">Disulfide bond</keyword>
<keyword id="KW-0325">Glycoprotein</keyword>
<keyword id="KW-0372">Hormone</keyword>
<keyword id="KW-1185">Reference proteome</keyword>
<keyword id="KW-0964">Secreted</keyword>
<keyword id="KW-0732">Signal</keyword>
<gene>
    <name type="primary">FSHB</name>
</gene>
<reference key="1">
    <citation type="journal article" date="1990" name="J. Mol. Endocrinol.">
        <title>The gene for the beta subunit of porcine FSH: absence of consensus oestrogen-responsive element and presence of retroposons.</title>
        <authorList>
            <person name="Hirai T."/>
            <person name="Takikawa H."/>
            <person name="Kato Y."/>
        </authorList>
    </citation>
    <scope>NUCLEOTIDE SEQUENCE [GENOMIC DNA]</scope>
    <source>
        <strain>Landrace X Yorkshire</strain>
        <tissue>Pituitary anterior lobe</tissue>
    </source>
</reference>
<reference key="2">
    <citation type="journal article" date="2000" name="Anim. Genet.">
        <title>Identification and characterization of a new allele for the beta subunit of follicle-stimulating hormone in Chinese pig breeds.</title>
        <authorList>
            <person name="Li M.D."/>
            <person name="Rohrer G.A."/>
            <person name="Wise T.H."/>
            <person name="Ford J.J."/>
        </authorList>
    </citation>
    <scope>NUCLEOTIDE SEQUENCE [MRNA]</scope>
    <source>
        <strain>Meishan</strain>
    </source>
</reference>
<reference key="3">
    <citation type="submission" date="2006-10" db="EMBL/GenBank/DDBJ databases">
        <authorList>
            <person name="Wang J.F."/>
            <person name="Ran X.Q."/>
            <person name="Liu J.J."/>
        </authorList>
    </citation>
    <scope>NUCLEOTIDE SEQUENCE [GENOMIC DNA]</scope>
    <source>
        <tissue>Blood</tissue>
    </source>
</reference>
<reference key="4">
    <citation type="journal article" date="1988" name="Mol. Cell. Endocrinol.">
        <title>Cloning and DNA sequence analysis of the cDNA for the precursor of porcine follicle stimulating hormone (FSH) beta subunit.</title>
        <authorList>
            <person name="Kato Y."/>
        </authorList>
    </citation>
    <scope>NUCLEOTIDE SEQUENCE [MRNA] OF 15-129</scope>
    <source>
        <tissue>Pituitary anterior lobe</tissue>
    </source>
</reference>
<reference key="5">
    <citation type="journal article" date="1978" name="Eur. J. Biochem.">
        <title>Porcine follitropin. The amino-acid sequence of the beta subunit.</title>
        <authorList>
            <person name="Closset J."/>
            <person name="Maghuin-Rogister G."/>
            <person name="Hennen G."/>
            <person name="Strosberg A.D."/>
        </authorList>
    </citation>
    <scope>PROTEIN SEQUENCE OF 21-126</scope>
</reference>
<name>FSHB_PIG</name>
<sequence>MKSLQFCFLFCCWKAICCNSCELTNITITVEKEECNFCISINTTWCAGYCYTRDLVYKDPARPNIQKTCTFKELVYETVKVPGCAHHADSLYTYPVATECHCGKCDSDSTDCTVRGLGPSYCSFSEMKE</sequence>
<feature type="signal peptide" evidence="2">
    <location>
        <begin position="1"/>
        <end position="20"/>
    </location>
</feature>
<feature type="chain" id="PRO_0000011715" description="Follitropin subunit beta">
    <location>
        <begin position="21"/>
        <end position="129"/>
    </location>
</feature>
<feature type="glycosylation site" description="N-linked (GlcNAc...) asparagine" evidence="1">
    <location>
        <position position="25"/>
    </location>
</feature>
<feature type="glycosylation site" description="N-linked (GlcNAc...) asparagine" evidence="1">
    <location>
        <position position="42"/>
    </location>
</feature>
<feature type="disulfide bond" evidence="1">
    <location>
        <begin position="21"/>
        <end position="69"/>
    </location>
</feature>
<feature type="disulfide bond" evidence="1">
    <location>
        <begin position="35"/>
        <end position="84"/>
    </location>
</feature>
<feature type="disulfide bond" evidence="1">
    <location>
        <begin position="38"/>
        <end position="122"/>
    </location>
</feature>
<feature type="disulfide bond" evidence="1">
    <location>
        <begin position="46"/>
        <end position="100"/>
    </location>
</feature>
<feature type="disulfide bond" evidence="1">
    <location>
        <begin position="50"/>
        <end position="102"/>
    </location>
</feature>
<feature type="disulfide bond" evidence="1">
    <location>
        <begin position="105"/>
        <end position="112"/>
    </location>
</feature>
<feature type="sequence conflict" description="In Ref. 5; AA sequence." evidence="3" ref="5">
    <original>KEECN</original>
    <variation>VKCLT</variation>
    <location>
        <begin position="32"/>
        <end position="36"/>
    </location>
</feature>
<feature type="sequence conflict" description="In Ref. 5; AA sequence." evidence="3" ref="5">
    <original>YT</original>
    <variation>TTG</variation>
    <location>
        <begin position="51"/>
        <end position="52"/>
    </location>
</feature>
<feature type="sequence conflict" description="In Ref. 5; AA sequence." evidence="3" ref="5">
    <original>FK</original>
    <variation>YR</variation>
    <location>
        <begin position="71"/>
        <end position="72"/>
    </location>
</feature>
<feature type="sequence conflict" description="In Ref. 5; AA sequence." evidence="3" ref="5">
    <original>S</original>
    <variation>G</variation>
    <location>
        <position position="125"/>
    </location>
</feature>
<evidence type="ECO:0000250" key="1">
    <source>
        <dbReference type="UniProtKB" id="P01225"/>
    </source>
</evidence>
<evidence type="ECO:0000269" key="2">
    <source>
    </source>
</evidence>
<evidence type="ECO:0000305" key="3"/>
<organism>
    <name type="scientific">Sus scrofa</name>
    <name type="common">Pig</name>
    <dbReference type="NCBI Taxonomy" id="9823"/>
    <lineage>
        <taxon>Eukaryota</taxon>
        <taxon>Metazoa</taxon>
        <taxon>Chordata</taxon>
        <taxon>Craniata</taxon>
        <taxon>Vertebrata</taxon>
        <taxon>Euteleostomi</taxon>
        <taxon>Mammalia</taxon>
        <taxon>Eutheria</taxon>
        <taxon>Laurasiatheria</taxon>
        <taxon>Artiodactyla</taxon>
        <taxon>Suina</taxon>
        <taxon>Suidae</taxon>
        <taxon>Sus</taxon>
    </lineage>
</organism>
<accession>P01228</accession>
<accession>Q3LRP6</accession>
<protein>
    <recommendedName>
        <fullName>Follitropin subunit beta</fullName>
    </recommendedName>
    <alternativeName>
        <fullName>Follicle-stimulating hormone beta subunit</fullName>
        <shortName>FSH-B</shortName>
        <shortName>FSH-beta</shortName>
    </alternativeName>
    <alternativeName>
        <fullName>Follitropin beta chain</fullName>
    </alternativeName>
</protein>
<proteinExistence type="evidence at protein level"/>
<comment type="function">
    <text evidence="1">Together with the alpha chain CGA constitutes follitropin, the follicle-stimulating hormone, and provides its biological specificity to the hormone heterodimer. Binds FSHR, a G protein-coupled receptor, on target cells to activate downstream signaling pathways. Follitropin is involved in follicle development and spermatogenesis in reproductive organs.</text>
</comment>
<comment type="subunit">
    <text evidence="1">Heterodimer. The active follitropin is a heterodimer composed of an alpha chain/CGA shared with other hormones and a unique beta chain/FSHB shown here.</text>
</comment>
<comment type="subcellular location">
    <subcellularLocation>
        <location evidence="1">Secreted</location>
    </subcellularLocation>
    <text evidence="1">Efficient secretion requires dimerization with CGA.</text>
</comment>
<comment type="similarity">
    <text evidence="3">Belongs to the glycoprotein hormones subunit beta family.</text>
</comment>